<evidence type="ECO:0000250" key="1">
    <source>
        <dbReference type="UniProtKB" id="P94692"/>
    </source>
</evidence>
<evidence type="ECO:0000255" key="2">
    <source>
        <dbReference type="PROSITE-ProRule" id="PRU00711"/>
    </source>
</evidence>
<evidence type="ECO:0000305" key="3"/>
<dbReference type="EC" id="1.2.7.-"/>
<dbReference type="EMBL" id="L14925">
    <property type="protein sequence ID" value="AAC36818.1"/>
    <property type="molecule type" value="Unassigned_DNA"/>
</dbReference>
<dbReference type="EMBL" id="BA000019">
    <property type="protein sequence ID" value="BAB74502.1"/>
    <property type="molecule type" value="Genomic_DNA"/>
</dbReference>
<dbReference type="PIR" id="AD2156">
    <property type="entry name" value="AD2156"/>
</dbReference>
<dbReference type="PIR" id="I39613">
    <property type="entry name" value="I39613"/>
</dbReference>
<dbReference type="RefSeq" id="WP_010996954.1">
    <property type="nucleotide sequence ID" value="NZ_RSCN01000003.1"/>
</dbReference>
<dbReference type="SMR" id="Q06879"/>
<dbReference type="STRING" id="103690.gene:10494837"/>
<dbReference type="KEGG" id="ana:alr2803"/>
<dbReference type="eggNOG" id="COG0674">
    <property type="taxonomic scope" value="Bacteria"/>
</dbReference>
<dbReference type="eggNOG" id="COG1013">
    <property type="taxonomic scope" value="Bacteria"/>
</dbReference>
<dbReference type="eggNOG" id="COG1014">
    <property type="taxonomic scope" value="Bacteria"/>
</dbReference>
<dbReference type="eggNOG" id="COG1146">
    <property type="taxonomic scope" value="Bacteria"/>
</dbReference>
<dbReference type="OrthoDB" id="9794954at2"/>
<dbReference type="Proteomes" id="UP000002483">
    <property type="component" value="Chromosome"/>
</dbReference>
<dbReference type="GO" id="GO:0051539">
    <property type="term" value="F:4 iron, 4 sulfur cluster binding"/>
    <property type="evidence" value="ECO:0007669"/>
    <property type="project" value="UniProtKB-KW"/>
</dbReference>
<dbReference type="GO" id="GO:0005506">
    <property type="term" value="F:iron ion binding"/>
    <property type="evidence" value="ECO:0007669"/>
    <property type="project" value="InterPro"/>
</dbReference>
<dbReference type="GO" id="GO:0043873">
    <property type="term" value="F:pyruvate-flavodoxin oxidoreductase activity"/>
    <property type="evidence" value="ECO:0007669"/>
    <property type="project" value="RHEA"/>
</dbReference>
<dbReference type="GO" id="GO:0030976">
    <property type="term" value="F:thiamine pyrophosphate binding"/>
    <property type="evidence" value="ECO:0007669"/>
    <property type="project" value="InterPro"/>
</dbReference>
<dbReference type="GO" id="GO:0022900">
    <property type="term" value="P:electron transport chain"/>
    <property type="evidence" value="ECO:0007669"/>
    <property type="project" value="InterPro"/>
</dbReference>
<dbReference type="GO" id="GO:0009399">
    <property type="term" value="P:nitrogen fixation"/>
    <property type="evidence" value="ECO:0007669"/>
    <property type="project" value="UniProtKB-KW"/>
</dbReference>
<dbReference type="GO" id="GO:0006979">
    <property type="term" value="P:response to oxidative stress"/>
    <property type="evidence" value="ECO:0007669"/>
    <property type="project" value="TreeGrafter"/>
</dbReference>
<dbReference type="CDD" id="cd03377">
    <property type="entry name" value="TPP_PFOR_PNO"/>
    <property type="match status" value="1"/>
</dbReference>
<dbReference type="CDD" id="cd07034">
    <property type="entry name" value="TPP_PYR_PFOR_IOR-alpha_like"/>
    <property type="match status" value="1"/>
</dbReference>
<dbReference type="FunFam" id="3.30.70.20:FF:000022">
    <property type="entry name" value="Pyruvate:ferredoxin (Flavodoxin) oxidoreductase"/>
    <property type="match status" value="1"/>
</dbReference>
<dbReference type="FunFam" id="3.40.50.920:FF:000007">
    <property type="entry name" value="Pyruvate:ferredoxin (Flavodoxin) oxidoreductase"/>
    <property type="match status" value="1"/>
</dbReference>
<dbReference type="FunFam" id="3.40.50.970:FF:000012">
    <property type="entry name" value="Pyruvate:ferredoxin (Flavodoxin) oxidoreductase"/>
    <property type="match status" value="1"/>
</dbReference>
<dbReference type="FunFam" id="3.40.50.970:FF:000041">
    <property type="entry name" value="Pyruvate:ferredoxin (Flavodoxin) oxidoreductase"/>
    <property type="match status" value="1"/>
</dbReference>
<dbReference type="FunFam" id="3.40.920.10:FF:000001">
    <property type="entry name" value="Pyruvate:ferredoxin (Flavodoxin) oxidoreductase"/>
    <property type="match status" value="1"/>
</dbReference>
<dbReference type="Gene3D" id="3.30.70.20">
    <property type="match status" value="1"/>
</dbReference>
<dbReference type="Gene3D" id="3.40.50.920">
    <property type="match status" value="1"/>
</dbReference>
<dbReference type="Gene3D" id="3.40.50.970">
    <property type="match status" value="2"/>
</dbReference>
<dbReference type="Gene3D" id="3.40.920.10">
    <property type="entry name" value="Pyruvate-ferredoxin oxidoreductase, PFOR, domain III"/>
    <property type="match status" value="1"/>
</dbReference>
<dbReference type="Gene3D" id="4.10.780.10">
    <property type="entry name" value="Pyruvate-flavodoxin oxidoreductase, EKR domain"/>
    <property type="match status" value="1"/>
</dbReference>
<dbReference type="InterPro" id="IPR017896">
    <property type="entry name" value="4Fe4S_Fe-S-bd"/>
</dbReference>
<dbReference type="InterPro" id="IPR017900">
    <property type="entry name" value="4Fe4S_Fe_S_CS"/>
</dbReference>
<dbReference type="InterPro" id="IPR033412">
    <property type="entry name" value="PFOR_II"/>
</dbReference>
<dbReference type="InterPro" id="IPR050722">
    <property type="entry name" value="Pyruvate:ferred/Flavod_OxRd"/>
</dbReference>
<dbReference type="InterPro" id="IPR037112">
    <property type="entry name" value="Pyrv-flavodox_OxR_EKR_sf"/>
</dbReference>
<dbReference type="InterPro" id="IPR019456">
    <property type="entry name" value="Pyrv-flavodox_OxRtase_EKR"/>
</dbReference>
<dbReference type="InterPro" id="IPR019752">
    <property type="entry name" value="Pyrv/ketoisovalerate_OxRed_cat"/>
</dbReference>
<dbReference type="InterPro" id="IPR002880">
    <property type="entry name" value="Pyrv_Fd/Flavodoxin_OxRdtase_N"/>
</dbReference>
<dbReference type="InterPro" id="IPR011895">
    <property type="entry name" value="Pyrv_flavodox_OxRed"/>
</dbReference>
<dbReference type="InterPro" id="IPR002869">
    <property type="entry name" value="Pyrv_flavodox_OxRed_cen"/>
</dbReference>
<dbReference type="InterPro" id="IPR029061">
    <property type="entry name" value="THDP-binding"/>
</dbReference>
<dbReference type="InterPro" id="IPR011766">
    <property type="entry name" value="TPP_enzyme_TPP-bd"/>
</dbReference>
<dbReference type="InterPro" id="IPR009014">
    <property type="entry name" value="Transketo_C/PFOR_II"/>
</dbReference>
<dbReference type="NCBIfam" id="TIGR02176">
    <property type="entry name" value="pyruv_ox_red"/>
    <property type="match status" value="1"/>
</dbReference>
<dbReference type="PANTHER" id="PTHR32154">
    <property type="entry name" value="PYRUVATE-FLAVODOXIN OXIDOREDUCTASE-RELATED"/>
    <property type="match status" value="1"/>
</dbReference>
<dbReference type="PANTHER" id="PTHR32154:SF0">
    <property type="entry name" value="PYRUVATE-FLAVODOXIN OXIDOREDUCTASE-RELATED"/>
    <property type="match status" value="1"/>
</dbReference>
<dbReference type="Pfam" id="PF10371">
    <property type="entry name" value="EKR"/>
    <property type="match status" value="1"/>
</dbReference>
<dbReference type="Pfam" id="PF12838">
    <property type="entry name" value="Fer4_7"/>
    <property type="match status" value="1"/>
</dbReference>
<dbReference type="Pfam" id="PF17147">
    <property type="entry name" value="PFOR_II"/>
    <property type="match status" value="1"/>
</dbReference>
<dbReference type="Pfam" id="PF01558">
    <property type="entry name" value="POR"/>
    <property type="match status" value="1"/>
</dbReference>
<dbReference type="Pfam" id="PF01855">
    <property type="entry name" value="POR_N"/>
    <property type="match status" value="1"/>
</dbReference>
<dbReference type="Pfam" id="PF02775">
    <property type="entry name" value="TPP_enzyme_C"/>
    <property type="match status" value="1"/>
</dbReference>
<dbReference type="PIRSF" id="PIRSF000159">
    <property type="entry name" value="NifJ"/>
    <property type="match status" value="1"/>
</dbReference>
<dbReference type="SMART" id="SM00890">
    <property type="entry name" value="EKR"/>
    <property type="match status" value="1"/>
</dbReference>
<dbReference type="SUPFAM" id="SSF54862">
    <property type="entry name" value="4Fe-4S ferredoxins"/>
    <property type="match status" value="1"/>
</dbReference>
<dbReference type="SUPFAM" id="SSF53323">
    <property type="entry name" value="Pyruvate-ferredoxin oxidoreductase, PFOR, domain III"/>
    <property type="match status" value="1"/>
</dbReference>
<dbReference type="SUPFAM" id="SSF52518">
    <property type="entry name" value="Thiamin diphosphate-binding fold (THDP-binding)"/>
    <property type="match status" value="2"/>
</dbReference>
<dbReference type="SUPFAM" id="SSF52922">
    <property type="entry name" value="TK C-terminal domain-like"/>
    <property type="match status" value="1"/>
</dbReference>
<dbReference type="PROSITE" id="PS00198">
    <property type="entry name" value="4FE4S_FER_1"/>
    <property type="match status" value="2"/>
</dbReference>
<dbReference type="PROSITE" id="PS51379">
    <property type="entry name" value="4FE4S_FER_2"/>
    <property type="match status" value="2"/>
</dbReference>
<accession>Q06879</accession>
<protein>
    <recommendedName>
        <fullName>Pyruvate-flavodoxin oxidoreductase</fullName>
        <ecNumber>1.2.7.-</ecNumber>
    </recommendedName>
</protein>
<keyword id="KW-0004">4Fe-4S</keyword>
<keyword id="KW-0249">Electron transport</keyword>
<keyword id="KW-0408">Iron</keyword>
<keyword id="KW-0411">Iron-sulfur</keyword>
<keyword id="KW-0479">Metal-binding</keyword>
<keyword id="KW-0535">Nitrogen fixation</keyword>
<keyword id="KW-0560">Oxidoreductase</keyword>
<keyword id="KW-1185">Reference proteome</keyword>
<keyword id="KW-0677">Repeat</keyword>
<keyword id="KW-0813">Transport</keyword>
<organism>
    <name type="scientific">Nostoc sp. (strain PCC 7120 / SAG 25.82 / UTEX 2576)</name>
    <dbReference type="NCBI Taxonomy" id="103690"/>
    <lineage>
        <taxon>Bacteria</taxon>
        <taxon>Bacillati</taxon>
        <taxon>Cyanobacteriota</taxon>
        <taxon>Cyanophyceae</taxon>
        <taxon>Nostocales</taxon>
        <taxon>Nostocaceae</taxon>
        <taxon>Nostoc</taxon>
    </lineage>
</organism>
<comment type="function">
    <text>Oxidoreductase required for the transfer of electrons from pyruvate to flavodoxin, which reduces nitrogenase.</text>
</comment>
<comment type="catalytic activity">
    <reaction>
        <text>oxidized [flavodoxin] + pyruvate + CoA + 2 H(+) = reduced [flavodoxin] + acetyl-CoA + CO2</text>
        <dbReference type="Rhea" id="RHEA:44140"/>
        <dbReference type="Rhea" id="RHEA-COMP:10622"/>
        <dbReference type="Rhea" id="RHEA-COMP:10623"/>
        <dbReference type="ChEBI" id="CHEBI:15361"/>
        <dbReference type="ChEBI" id="CHEBI:15378"/>
        <dbReference type="ChEBI" id="CHEBI:16526"/>
        <dbReference type="ChEBI" id="CHEBI:57287"/>
        <dbReference type="ChEBI" id="CHEBI:57288"/>
        <dbReference type="ChEBI" id="CHEBI:57618"/>
        <dbReference type="ChEBI" id="CHEBI:58210"/>
    </reaction>
</comment>
<comment type="cofactor">
    <cofactor evidence="1">
        <name>[4Fe-4S] cluster</name>
        <dbReference type="ChEBI" id="CHEBI:49883"/>
    </cofactor>
    <text evidence="1">Binds 3 [4Fe-4S] clusters per subunit.</text>
</comment>
<comment type="induction">
    <text>By iron deprivation.</text>
</comment>
<comment type="similarity">
    <text evidence="3">Belongs to the pyruvate:ferredoxin/flavodoxin oxidoreductase family.</text>
</comment>
<proteinExistence type="evidence at transcript level"/>
<gene>
    <name type="primary">nifJ</name>
    <name type="ordered locus">alr2803</name>
</gene>
<sequence length="1199" mass="132170">MSQTFATIDGNEAVARVAYKLNEVIAIYPITPSSAMGEWADAWMAEGRPNLWGTVPSVVQMQSEGGAAGAVHGALQTGSLSTTFTASQGLLLMIPNLYKIGGELTSMVVHVAARSLATHALSIFGDHSDVMAARGTGFAMLCSASVQESHDFALIAHAATLDTRVSFLHFFDGFRTSHEVQKVELLADDDVRSLINEDKIFAHRARALTPDSPLLRGTAQNPDVFFQAREGANPYYNACPAIVQGIMDKFGERTGRYYQIYEYHGASDADRLIIIMGSGCETVHETVDYLNARGEKVGVLKVRLFRPWDVERFVQALPHSVQAIAVLDRTKEPGSAGEPLYQDVVTAIHEGWVNKNNSPVPSPQSPVPKIIGGRYGLSSKEFTPAMVKAVFDNLAQATPKNHFTIGINDDVTHTSLEYDPSFSTEPDNVVRAMFYGLGSDGTVGANKNSIKIIGEGTDNYAQGYFVYDSKKSGSMTVSHLRFGSQPIRSTYLIDQANFIGCHHWGFLERIEVLNAAAHGATILLNSPYNAATVWENLPLKVRLQILDKQLKLYVINANQVARDSGMGGRINTIMQVCFFALAGVLPEVQAIAKIKQAIEKTYGKKGVEVVRMNLQAVDQTLENLHEVKIPIEEKGKWIDEEALLSNQSPFSTSAPKFVRDVLGKIMVWQGDDLPVSTLPPDGTFPTGTAKWEKRNVAQEIPVWDTDICVQCSKCVMVCPHAAIRAKVYQPSELENAPPTFKSVDAKDRDFANQKFTIQVAPEDCTGCAICVNVCPAKNKSEPSLKAINMANQLPLREQERDNWDFFLNLPNPDRRNLKLNQIRQQQLQEPLFEFSGACAGCGETPYVKLLTQLFGDRSVIANATGCSSIYGGNLPTTPWTKNNDGRGPAWSNSLFEDNAEFGFGYRLSLDKQAEFAAELLQQFSTEVGDNLVDSILKAPQKTEADIWEQRQRIELLKQQLDKIPTFDPNLKSKIQNLKSLADYLVKKSVWIIGGDGWAYDIDFGGIDHVIASGRNVNILVMDTEVYSNTGGQSSKATPKAAVAKFAASGKPAQKKDMGLMAMNYGNVYVASVALGAKDDQTLKAFLEAEAFDGPSIIIAYSHCIAHGINMTTGMNQQKALVESGRWLLYRYNPLLQEQGKNPLQLDMRSPTQSVEQSMYQENRFKMLTKSKPEVAKQLLEQAQAEVDARWQMYQYLASR</sequence>
<reference key="1">
    <citation type="journal article" date="1993" name="Proc. Natl. Acad. Sci. U.S.A.">
        <title>Growth of the cyanobacterium Anabaena on molecular nitrogen: NifJ is required when iron is limited.</title>
        <authorList>
            <person name="Bauer C.C."/>
            <person name="Scappino L."/>
            <person name="Haselkorn R."/>
        </authorList>
    </citation>
    <scope>NUCLEOTIDE SEQUENCE [GENOMIC DNA]</scope>
</reference>
<reference key="2">
    <citation type="journal article" date="2001" name="DNA Res.">
        <title>Complete genomic sequence of the filamentous nitrogen-fixing cyanobacterium Anabaena sp. strain PCC 7120.</title>
        <authorList>
            <person name="Kaneko T."/>
            <person name="Nakamura Y."/>
            <person name="Wolk C.P."/>
            <person name="Kuritz T."/>
            <person name="Sasamoto S."/>
            <person name="Watanabe A."/>
            <person name="Iriguchi M."/>
            <person name="Ishikawa A."/>
            <person name="Kawashima K."/>
            <person name="Kimura T."/>
            <person name="Kishida Y."/>
            <person name="Kohara M."/>
            <person name="Matsumoto M."/>
            <person name="Matsuno A."/>
            <person name="Muraki A."/>
            <person name="Nakazaki N."/>
            <person name="Shimpo S."/>
            <person name="Sugimoto M."/>
            <person name="Takazawa M."/>
            <person name="Yamada M."/>
            <person name="Yasuda M."/>
            <person name="Tabata S."/>
        </authorList>
    </citation>
    <scope>NUCLEOTIDE SEQUENCE [LARGE SCALE GENOMIC DNA]</scope>
    <source>
        <strain>PCC 7120 / SAG 25.82 / UTEX 2576</strain>
    </source>
</reference>
<feature type="chain" id="PRO_0000215551" description="Pyruvate-flavodoxin oxidoreductase">
    <location>
        <begin position="1"/>
        <end position="1199"/>
    </location>
</feature>
<feature type="domain" description="4Fe-4S ferredoxin-type 1" evidence="2">
    <location>
        <begin position="699"/>
        <end position="728"/>
    </location>
</feature>
<feature type="domain" description="4Fe-4S ferredoxin-type 2" evidence="2">
    <location>
        <begin position="755"/>
        <end position="784"/>
    </location>
</feature>
<feature type="binding site" evidence="1">
    <location>
        <position position="708"/>
    </location>
    <ligand>
        <name>[4Fe-4S] cluster</name>
        <dbReference type="ChEBI" id="CHEBI:49883"/>
        <label>1</label>
    </ligand>
</feature>
<feature type="binding site" evidence="1">
    <location>
        <position position="711"/>
    </location>
    <ligand>
        <name>[4Fe-4S] cluster</name>
        <dbReference type="ChEBI" id="CHEBI:49883"/>
        <label>1</label>
    </ligand>
</feature>
<feature type="binding site" evidence="1">
    <location>
        <position position="714"/>
    </location>
    <ligand>
        <name>[4Fe-4S] cluster</name>
        <dbReference type="ChEBI" id="CHEBI:49883"/>
        <label>1</label>
    </ligand>
</feature>
<feature type="binding site" evidence="1">
    <location>
        <position position="718"/>
    </location>
    <ligand>
        <name>[4Fe-4S] cluster</name>
        <dbReference type="ChEBI" id="CHEBI:49883"/>
        <label>2</label>
    </ligand>
</feature>
<feature type="binding site" evidence="1">
    <location>
        <position position="764"/>
    </location>
    <ligand>
        <name>[4Fe-4S] cluster</name>
        <dbReference type="ChEBI" id="CHEBI:49883"/>
        <label>2</label>
    </ligand>
</feature>
<feature type="binding site" evidence="1">
    <location>
        <position position="767"/>
    </location>
    <ligand>
        <name>[4Fe-4S] cluster</name>
        <dbReference type="ChEBI" id="CHEBI:49883"/>
        <label>2</label>
    </ligand>
</feature>
<feature type="binding site" evidence="1">
    <location>
        <position position="770"/>
    </location>
    <ligand>
        <name>[4Fe-4S] cluster</name>
        <dbReference type="ChEBI" id="CHEBI:49883"/>
        <label>2</label>
    </ligand>
</feature>
<feature type="binding site" evidence="1">
    <location>
        <position position="774"/>
    </location>
    <ligand>
        <name>[4Fe-4S] cluster</name>
        <dbReference type="ChEBI" id="CHEBI:49883"/>
        <label>1</label>
    </ligand>
</feature>
<feature type="binding site" evidence="1">
    <location>
        <position position="838"/>
    </location>
    <ligand>
        <name>[4Fe-4S] cluster</name>
        <dbReference type="ChEBI" id="CHEBI:49883"/>
        <label>3</label>
    </ligand>
</feature>
<feature type="binding site" evidence="1">
    <location>
        <position position="841"/>
    </location>
    <ligand>
        <name>[4Fe-4S] cluster</name>
        <dbReference type="ChEBI" id="CHEBI:49883"/>
        <label>3</label>
    </ligand>
</feature>
<feature type="binding site" evidence="1">
    <location>
        <position position="866"/>
    </location>
    <ligand>
        <name>[4Fe-4S] cluster</name>
        <dbReference type="ChEBI" id="CHEBI:49883"/>
        <label>3</label>
    </ligand>
</feature>
<feature type="binding site" evidence="1">
    <location>
        <position position="1103"/>
    </location>
    <ligand>
        <name>[4Fe-4S] cluster</name>
        <dbReference type="ChEBI" id="CHEBI:49883"/>
        <label>3</label>
    </ligand>
</feature>
<feature type="sequence conflict" description="In Ref. 1; AAC36818." evidence="3" ref="1">
    <original>F</original>
    <variation>FF</variation>
    <location>
        <position position="250"/>
    </location>
</feature>
<feature type="sequence conflict" description="In Ref. 1; AAC36818." evidence="3" ref="1">
    <original>G</original>
    <variation>A</variation>
    <location>
        <position position="505"/>
    </location>
</feature>
<feature type="sequence conflict" description="In Ref. 1; AAC36818." evidence="3" ref="1">
    <original>AAAHG</original>
    <variation>RLLM</variation>
    <location>
        <begin position="515"/>
        <end position="519"/>
    </location>
</feature>
<feature type="sequence conflict" description="In Ref. 1; AAC36818." evidence="3" ref="1">
    <original>T</original>
    <variation>I</variation>
    <location>
        <position position="1023"/>
    </location>
</feature>
<feature type="sequence conflict" description="In Ref. 1." evidence="3" ref="1">
    <location>
        <begin position="1183"/>
        <end position="1184"/>
    </location>
</feature>
<name>NIFJ_NOSS1</name>